<protein>
    <recommendedName>
        <fullName>Uncharacterized protein Lin0124/Lin2378/Lin2564</fullName>
    </recommendedName>
</protein>
<organism>
    <name type="scientific">Listeria innocua serovar 6a (strain ATCC BAA-680 / CLIP 11262)</name>
    <dbReference type="NCBI Taxonomy" id="272626"/>
    <lineage>
        <taxon>Bacteria</taxon>
        <taxon>Bacillati</taxon>
        <taxon>Bacillota</taxon>
        <taxon>Bacilli</taxon>
        <taxon>Bacillales</taxon>
        <taxon>Listeriaceae</taxon>
        <taxon>Listeria</taxon>
    </lineage>
</organism>
<sequence length="113" mass="12527">MSELIKVFKYDADGIFERDDLIVLEKGEKVPDGYTLIAPPVPSVNPVFNVKTQKWSAGEDASVMDPPPLSEIEKLTQDYADLMLYVAEVEQKTEQTQQDNANLLLSLAEAGVL</sequence>
<name>Y124_LISIN</name>
<accession>Q925X3</accession>
<dbReference type="EMBL" id="AL596163">
    <property type="protein sequence ID" value="CAC95357.1"/>
    <property type="molecule type" value="Genomic_DNA"/>
</dbReference>
<dbReference type="EMBL" id="AL596172">
    <property type="protein sequence ID" value="CAC97605.1"/>
    <property type="molecule type" value="Genomic_DNA"/>
</dbReference>
<dbReference type="EMBL" id="AL596172">
    <property type="protein sequence ID" value="CAC97791.1"/>
    <property type="molecule type" value="Genomic_DNA"/>
</dbReference>
<dbReference type="PIR" id="AE1448">
    <property type="entry name" value="AE1448"/>
</dbReference>
<dbReference type="PIR" id="AE1729">
    <property type="entry name" value="AE1729"/>
</dbReference>
<dbReference type="PIR" id="AG1752">
    <property type="entry name" value="AG1752"/>
</dbReference>
<dbReference type="RefSeq" id="WP_003725055.1">
    <property type="nucleotide sequence ID" value="NC_003212.1"/>
</dbReference>
<dbReference type="SMR" id="Q925X3"/>
<dbReference type="STRING" id="272626.gene:17564436"/>
<dbReference type="KEGG" id="lin:lin0124"/>
<dbReference type="KEGG" id="lin:lin2378"/>
<dbReference type="KEGG" id="lin:lin2564"/>
<dbReference type="eggNOG" id="ENOG502ZWJ4">
    <property type="taxonomic scope" value="Bacteria"/>
</dbReference>
<dbReference type="HOGENOM" id="CLU_2130432_0_0_9"/>
<dbReference type="OrthoDB" id="9804960at2"/>
<dbReference type="Proteomes" id="UP000002513">
    <property type="component" value="Chromosome"/>
</dbReference>
<proteinExistence type="predicted"/>
<feature type="chain" id="PRO_0000210808" description="Uncharacterized protein Lin0124/Lin2378/Lin2564">
    <location>
        <begin position="1"/>
        <end position="113"/>
    </location>
</feature>
<reference key="1">
    <citation type="journal article" date="2001" name="Science">
        <title>Comparative genomics of Listeria species.</title>
        <authorList>
            <person name="Glaser P."/>
            <person name="Frangeul L."/>
            <person name="Buchrieser C."/>
            <person name="Rusniok C."/>
            <person name="Amend A."/>
            <person name="Baquero F."/>
            <person name="Berche P."/>
            <person name="Bloecker H."/>
            <person name="Brandt P."/>
            <person name="Chakraborty T."/>
            <person name="Charbit A."/>
            <person name="Chetouani F."/>
            <person name="Couve E."/>
            <person name="de Daruvar A."/>
            <person name="Dehoux P."/>
            <person name="Domann E."/>
            <person name="Dominguez-Bernal G."/>
            <person name="Duchaud E."/>
            <person name="Durant L."/>
            <person name="Dussurget O."/>
            <person name="Entian K.-D."/>
            <person name="Fsihi H."/>
            <person name="Garcia-del Portillo F."/>
            <person name="Garrido P."/>
            <person name="Gautier L."/>
            <person name="Goebel W."/>
            <person name="Gomez-Lopez N."/>
            <person name="Hain T."/>
            <person name="Hauf J."/>
            <person name="Jackson D."/>
            <person name="Jones L.-M."/>
            <person name="Kaerst U."/>
            <person name="Kreft J."/>
            <person name="Kuhn M."/>
            <person name="Kunst F."/>
            <person name="Kurapkat G."/>
            <person name="Madueno E."/>
            <person name="Maitournam A."/>
            <person name="Mata Vicente J."/>
            <person name="Ng E."/>
            <person name="Nedjari H."/>
            <person name="Nordsiek G."/>
            <person name="Novella S."/>
            <person name="de Pablos B."/>
            <person name="Perez-Diaz J.-C."/>
            <person name="Purcell R."/>
            <person name="Remmel B."/>
            <person name="Rose M."/>
            <person name="Schlueter T."/>
            <person name="Simoes N."/>
            <person name="Tierrez A."/>
            <person name="Vazquez-Boland J.-A."/>
            <person name="Voss H."/>
            <person name="Wehland J."/>
            <person name="Cossart P."/>
        </authorList>
    </citation>
    <scope>NUCLEOTIDE SEQUENCE [LARGE SCALE GENOMIC DNA]</scope>
    <source>
        <strain>ATCC BAA-680 / CLIP 11262</strain>
    </source>
</reference>
<gene>
    <name type="ordered locus">lin0124</name>
</gene>
<gene>
    <name type="ordered locus">lin2378</name>
</gene>
<gene>
    <name type="ordered locus">lin2564</name>
</gene>